<organism>
    <name type="scientific">Arabidopsis thaliana</name>
    <name type="common">Mouse-ear cress</name>
    <dbReference type="NCBI Taxonomy" id="3702"/>
    <lineage>
        <taxon>Eukaryota</taxon>
        <taxon>Viridiplantae</taxon>
        <taxon>Streptophyta</taxon>
        <taxon>Embryophyta</taxon>
        <taxon>Tracheophyta</taxon>
        <taxon>Spermatophyta</taxon>
        <taxon>Magnoliopsida</taxon>
        <taxon>eudicotyledons</taxon>
        <taxon>Gunneridae</taxon>
        <taxon>Pentapetalae</taxon>
        <taxon>rosids</taxon>
        <taxon>malvids</taxon>
        <taxon>Brassicales</taxon>
        <taxon>Brassicaceae</taxon>
        <taxon>Camelineae</taxon>
        <taxon>Arabidopsis</taxon>
    </lineage>
</organism>
<keyword id="KW-0929">Antimicrobial</keyword>
<keyword id="KW-1015">Disulfide bond</keyword>
<keyword id="KW-0295">Fungicide</keyword>
<keyword id="KW-0611">Plant defense</keyword>
<keyword id="KW-1185">Reference proteome</keyword>
<dbReference type="EMBL" id="AP000381">
    <property type="status" value="NOT_ANNOTATED_CDS"/>
    <property type="molecule type" value="Genomic_DNA"/>
</dbReference>
<dbReference type="EMBL" id="CP002686">
    <property type="status" value="NOT_ANNOTATED_CDS"/>
    <property type="molecule type" value="Genomic_DNA"/>
</dbReference>
<dbReference type="SMR" id="P0CAY1"/>
<dbReference type="Araport" id="AT3G27283"/>
<dbReference type="TAIR" id="AT3G27283"/>
<dbReference type="InParanoid" id="P0CAY1"/>
<dbReference type="Proteomes" id="UP000006548">
    <property type="component" value="Chromosome 3"/>
</dbReference>
<dbReference type="GO" id="GO:0050832">
    <property type="term" value="P:defense response to fungus"/>
    <property type="evidence" value="ECO:0007669"/>
    <property type="project" value="UniProtKB-KW"/>
</dbReference>
<dbReference type="GO" id="GO:0031640">
    <property type="term" value="P:killing of cells of another organism"/>
    <property type="evidence" value="ECO:0007669"/>
    <property type="project" value="UniProtKB-KW"/>
</dbReference>
<name>DEF42_ARATH</name>
<proteinExistence type="uncertain"/>
<comment type="similarity">
    <text evidence="2">Belongs to the DEFL family.</text>
</comment>
<comment type="caution">
    <text evidence="2">Could be the product of a pseudogene. Lacks the signal peptide, which is a conserved feature of the family.</text>
</comment>
<gene>
    <name type="ordered locus">At3g27283</name>
    <name type="ORF">K17E12</name>
</gene>
<feature type="chain" id="PRO_0000379624" description="Putative defensin-like protein 42">
    <location>
        <begin position="1"/>
        <end position="73"/>
    </location>
</feature>
<feature type="disulfide bond" evidence="1">
    <location>
        <begin position="6"/>
        <end position="58"/>
    </location>
</feature>
<feature type="disulfide bond" evidence="1">
    <location>
        <begin position="18"/>
        <end position="41"/>
    </location>
</feature>
<feature type="disulfide bond" evidence="1">
    <location>
        <begin position="27"/>
        <end position="50"/>
    </location>
</feature>
<feature type="disulfide bond" evidence="1">
    <location>
        <begin position="31"/>
        <end position="52"/>
    </location>
</feature>
<evidence type="ECO:0000250" key="1"/>
<evidence type="ECO:0000305" key="2"/>
<protein>
    <recommendedName>
        <fullName>Putative defensin-like protein 42</fullName>
    </recommendedName>
</protein>
<accession>P0CAY1</accession>
<reference key="1">
    <citation type="journal article" date="2000" name="DNA Res.">
        <title>Structural analysis of Arabidopsis thaliana chromosome 3. II. Sequence features of the 4,251,695 bp regions covered by 90 P1, TAC and BAC clones.</title>
        <authorList>
            <person name="Kaneko T."/>
            <person name="Katoh T."/>
            <person name="Sato S."/>
            <person name="Nakamura Y."/>
            <person name="Asamizu E."/>
            <person name="Tabata S."/>
        </authorList>
    </citation>
    <scope>NUCLEOTIDE SEQUENCE [LARGE SCALE GENOMIC DNA]</scope>
    <source>
        <strain>cv. Columbia</strain>
    </source>
</reference>
<reference key="2">
    <citation type="journal article" date="2017" name="Plant J.">
        <title>Araport11: a complete reannotation of the Arabidopsis thaliana reference genome.</title>
        <authorList>
            <person name="Cheng C.Y."/>
            <person name="Krishnakumar V."/>
            <person name="Chan A.P."/>
            <person name="Thibaud-Nissen F."/>
            <person name="Schobel S."/>
            <person name="Town C.D."/>
        </authorList>
    </citation>
    <scope>GENOME REANNOTATION</scope>
    <source>
        <strain>cv. Columbia</strain>
    </source>
</reference>
<reference key="3">
    <citation type="journal article" date="2005" name="Plant Physiol.">
        <title>Genome organization of more than 300 defensin-like genes in Arabidopsis.</title>
        <authorList>
            <person name="Silverstein K.A.T."/>
            <person name="Graham M.A."/>
            <person name="Paape T.D."/>
            <person name="VandenBosch K.A."/>
        </authorList>
    </citation>
    <scope>GENE FAMILY</scope>
</reference>
<sequence length="73" mass="8162">MNWELCDDYPSKAPPETCNKVDGARRCRTSCNNEGYGGANCNLKGKVKVCECTILRVCLPHHKRPPHVPKPPK</sequence>